<accession>O82902</accession>
<accession>Q7AJQ0</accession>
<accession>Q7BST5</accession>
<proteinExistence type="predicted"/>
<dbReference type="EMBL" id="AF401292">
    <property type="protein sequence ID" value="AAR00486.1"/>
    <property type="molecule type" value="Genomic_DNA"/>
</dbReference>
<dbReference type="EMBL" id="AF074613">
    <property type="protein sequence ID" value="AAC70146.1"/>
    <property type="molecule type" value="Genomic_DNA"/>
</dbReference>
<dbReference type="EMBL" id="AB011549">
    <property type="protein sequence ID" value="BAA31800.1"/>
    <property type="molecule type" value="Genomic_DNA"/>
</dbReference>
<dbReference type="PIR" id="T00281">
    <property type="entry name" value="T00281"/>
</dbReference>
<dbReference type="RefSeq" id="NP_052650.1">
    <property type="nucleotide sequence ID" value="NC_002128.1"/>
</dbReference>
<dbReference type="RefSeq" id="WP_000271685.1">
    <property type="nucleotide sequence ID" value="NZ_VOAI01000050.1"/>
</dbReference>
<dbReference type="RefSeq" id="YP_001294722.1">
    <property type="nucleotide sequence ID" value="NC_009602.1"/>
</dbReference>
<dbReference type="SMR" id="O82902"/>
<dbReference type="KEGG" id="ece:Z_L7078"/>
<dbReference type="KEGG" id="ecs:pO157p43"/>
<dbReference type="PATRIC" id="fig|386585.9.peg.49"/>
<dbReference type="eggNOG" id="ENOG502ZJDM">
    <property type="taxonomic scope" value="Bacteria"/>
</dbReference>
<dbReference type="HOGENOM" id="CLU_152459_0_0_6"/>
<dbReference type="OMA" id="NDIRCVC"/>
<dbReference type="Proteomes" id="UP000000558">
    <property type="component" value="Plasmid pO157"/>
</dbReference>
<dbReference type="Proteomes" id="UP000002519">
    <property type="component" value="Plasmid pO157"/>
</dbReference>
<sequence length="140" mass="15695">MYCTVKEIIRDVLDTDVPDSECVFAVVLTRGDVRHIAQDWNLSDDELETVMQRLDDAFEYGADVSIVHDVVRELMEEKRASRQVTVPAVMLEKVMALAGSEMKRLYAVGSENGGDGDAFVREEREAMDVVLQALDGEHMS</sequence>
<name>YUBJ_ECO57</name>
<organism>
    <name type="scientific">Escherichia coli O157:H7</name>
    <dbReference type="NCBI Taxonomy" id="83334"/>
    <lineage>
        <taxon>Bacteria</taxon>
        <taxon>Pseudomonadati</taxon>
        <taxon>Pseudomonadota</taxon>
        <taxon>Gammaproteobacteria</taxon>
        <taxon>Enterobacterales</taxon>
        <taxon>Enterobacteriaceae</taxon>
        <taxon>Escherichia</taxon>
    </lineage>
</organism>
<gene>
    <name type="primary">yubJ</name>
    <name type="ordered locus">L7078</name>
    <name type="ordered locus">ECO57PM43</name>
</gene>
<protein>
    <recommendedName>
        <fullName>Uncharacterized protein YubJ</fullName>
    </recommendedName>
</protein>
<reference key="1">
    <citation type="journal article" date="2001" name="Infect. Immun.">
        <title>Novel type of fimbriae encoded by the large plasmid of sorbitol-fermenting enterohemorrhagic Escherichia coli O157:H(-).</title>
        <authorList>
            <person name="Brunder W."/>
            <person name="Khan A.S."/>
            <person name="Hacker J."/>
            <person name="Karch H."/>
        </authorList>
    </citation>
    <scope>NUCLEOTIDE SEQUENCE [GENOMIC DNA]</scope>
    <source>
        <strain>O157:H- / 3072/96 / EHEC</strain>
        <plasmid>pSFO157</plasmid>
    </source>
</reference>
<reference key="2">
    <citation type="journal article" date="1998" name="Nucleic Acids Res.">
        <title>The complete DNA sequence and analysis of the large virulence plasmid of Escherichia coli O157:H7.</title>
        <authorList>
            <person name="Burland V."/>
            <person name="Shao Y."/>
            <person name="Perna N.T."/>
            <person name="Plunkett G. III"/>
            <person name="Sofia H.J."/>
            <person name="Blattner F.R."/>
        </authorList>
    </citation>
    <scope>NUCLEOTIDE SEQUENCE [LARGE SCALE GENOMIC DNA]</scope>
    <source>
        <strain>O157:H7 / EDL933 / ATCC 700927 / EHEC</strain>
        <plasmid>pO157</plasmid>
    </source>
</reference>
<reference key="3">
    <citation type="journal article" date="1998" name="DNA Res.">
        <title>Complete nucleotide sequences of 93-kb and 3.3-kb plasmids of an enterohemorrhagic Escherichia coli O157:H7 derived from Sakai outbreak.</title>
        <authorList>
            <person name="Makino K."/>
            <person name="Ishii K."/>
            <person name="Yasunaga T."/>
            <person name="Hattori M."/>
            <person name="Yokoyama K."/>
            <person name="Yatsudo H.C."/>
            <person name="Kubota Y."/>
            <person name="Yamaichi Y."/>
            <person name="Iida T."/>
            <person name="Yamamoto K."/>
            <person name="Honda T."/>
            <person name="Han C.G."/>
            <person name="Ohtsubo A."/>
            <person name="Kasamatsu M."/>
            <person name="Hayashi T."/>
            <person name="Kuhara S."/>
            <person name="Shinagawa H."/>
        </authorList>
    </citation>
    <scope>NUCLEOTIDE SEQUENCE [LARGE SCALE GENOMIC DNA]</scope>
    <source>
        <strain>O157:H7 / Sakai / RIMD 0509952 / EHEC</strain>
        <plasmid>pO157</plasmid>
    </source>
</reference>
<geneLocation type="plasmid">
    <name>pO157</name>
</geneLocation>
<geneLocation type="plasmid">
    <name>pSFO157</name>
</geneLocation>
<keyword id="KW-0614">Plasmid</keyword>
<keyword id="KW-1185">Reference proteome</keyword>
<feature type="chain" id="PRO_0000262316" description="Uncharacterized protein YubJ">
    <location>
        <begin position="1"/>
        <end position="140"/>
    </location>
</feature>